<name>FHL5_RAT</name>
<sequence length="284" mass="32970">MTSTQFDCQYCTASLLGKKYVLKDDNLYCISCYDRIFSNYCEQCKEPIESDSKDLCYKNRHWHEGCFRCNKCHHSLVEKPFVAKDERLLCTDCYSNECSSKCFHCKRTIMPGSRKMEFKGNYWHETCFVCEHCRQPIGTKPLISKESGNYCVPCFEKEFAHYCNFCKKVITSGGITFRDQIWHKECFLCSGCRKELYEEAFMSKDDFPFCLDCYNHLYAKKCAACTKPITGLRGAKFICFQDRQWHSECFNCGKCSVSLVGEGFLTQNMEILCRKCGSGADTDM</sequence>
<comment type="function">
    <text evidence="1">May be involved in the regulation of spermatogenesis. Stimulates CREM transcriptional activity in a phosphorylation-independent manner (By similarity).</text>
</comment>
<comment type="subunit">
    <text evidence="2">Interacts with CREM (via the third LIM domain). Interacts (via second LIM domain) with SPAG8.</text>
</comment>
<comment type="subcellular location">
    <subcellularLocation>
        <location evidence="1">Nucleus</location>
    </subcellularLocation>
    <text evidence="1">Nuclei of round and elongated spermatids.</text>
</comment>
<dbReference type="EMBL" id="BC079327">
    <property type="protein sequence ID" value="AAH79327.1"/>
    <property type="molecule type" value="mRNA"/>
</dbReference>
<dbReference type="RefSeq" id="NP_001013106.1">
    <property type="nucleotide sequence ID" value="NM_001013088.1"/>
</dbReference>
<dbReference type="RefSeq" id="XP_008761817.2">
    <property type="nucleotide sequence ID" value="XM_008763595.4"/>
</dbReference>
<dbReference type="RefSeq" id="XP_017448722.1">
    <property type="nucleotide sequence ID" value="XM_017593233.3"/>
</dbReference>
<dbReference type="RefSeq" id="XP_038965354.1">
    <property type="nucleotide sequence ID" value="XM_039109426.2"/>
</dbReference>
<dbReference type="RefSeq" id="XP_063143369.1">
    <property type="nucleotide sequence ID" value="XM_063287299.1"/>
</dbReference>
<dbReference type="SMR" id="Q6AXT1"/>
<dbReference type="FunCoup" id="Q6AXT1">
    <property type="interactions" value="27"/>
</dbReference>
<dbReference type="STRING" id="10116.ENSRNOP00000047630"/>
<dbReference type="PhosphoSitePlus" id="Q6AXT1"/>
<dbReference type="PaxDb" id="10116-ENSRNOP00000047630"/>
<dbReference type="GeneID" id="297954"/>
<dbReference type="KEGG" id="rno:297954"/>
<dbReference type="UCSC" id="RGD:1307056">
    <property type="organism name" value="rat"/>
</dbReference>
<dbReference type="AGR" id="RGD:1307056"/>
<dbReference type="CTD" id="9457"/>
<dbReference type="RGD" id="1307056">
    <property type="gene designation" value="Fhl5"/>
</dbReference>
<dbReference type="VEuPathDB" id="HostDB:ENSRNOG00000007680"/>
<dbReference type="eggNOG" id="KOG1704">
    <property type="taxonomic scope" value="Eukaryota"/>
</dbReference>
<dbReference type="HOGENOM" id="CLU_001357_2_0_1"/>
<dbReference type="InParanoid" id="Q6AXT1"/>
<dbReference type="OrthoDB" id="15at9989"/>
<dbReference type="PhylomeDB" id="Q6AXT1"/>
<dbReference type="TreeFam" id="TF314113"/>
<dbReference type="PRO" id="PR:Q6AXT1"/>
<dbReference type="Proteomes" id="UP000002494">
    <property type="component" value="Chromosome 5"/>
</dbReference>
<dbReference type="Bgee" id="ENSRNOG00000007680">
    <property type="expression patterns" value="Expressed in testis and 11 other cell types or tissues"/>
</dbReference>
<dbReference type="GO" id="GO:0005634">
    <property type="term" value="C:nucleus"/>
    <property type="evidence" value="ECO:0000318"/>
    <property type="project" value="GO_Central"/>
</dbReference>
<dbReference type="GO" id="GO:0030018">
    <property type="term" value="C:Z disc"/>
    <property type="evidence" value="ECO:0000318"/>
    <property type="project" value="GO_Central"/>
</dbReference>
<dbReference type="GO" id="GO:0003713">
    <property type="term" value="F:transcription coactivator activity"/>
    <property type="evidence" value="ECO:0000266"/>
    <property type="project" value="RGD"/>
</dbReference>
<dbReference type="GO" id="GO:0008270">
    <property type="term" value="F:zinc ion binding"/>
    <property type="evidence" value="ECO:0007669"/>
    <property type="project" value="UniProtKB-KW"/>
</dbReference>
<dbReference type="GO" id="GO:0045944">
    <property type="term" value="P:positive regulation of transcription by RNA polymerase II"/>
    <property type="evidence" value="ECO:0000266"/>
    <property type="project" value="RGD"/>
</dbReference>
<dbReference type="CDD" id="cd09343">
    <property type="entry name" value="LIM1_FHL"/>
    <property type="match status" value="1"/>
</dbReference>
<dbReference type="CDD" id="cd09428">
    <property type="entry name" value="LIM2_FHL5"/>
    <property type="match status" value="1"/>
</dbReference>
<dbReference type="CDD" id="cd09347">
    <property type="entry name" value="LIM4_FHL"/>
    <property type="match status" value="1"/>
</dbReference>
<dbReference type="FunFam" id="2.10.110.10:FF:000013">
    <property type="entry name" value="Four and a half LIM domains 1"/>
    <property type="match status" value="1"/>
</dbReference>
<dbReference type="FunFam" id="2.10.110.10:FF:000030">
    <property type="entry name" value="Four and a half LIM domains protein 2"/>
    <property type="match status" value="1"/>
</dbReference>
<dbReference type="FunFam" id="2.10.110.10:FF:000048">
    <property type="entry name" value="Four and a half LIM domains protein 2"/>
    <property type="match status" value="1"/>
</dbReference>
<dbReference type="FunFam" id="2.10.110.10:FF:000049">
    <property type="entry name" value="Four and a half LIM domains protein 2"/>
    <property type="match status" value="1"/>
</dbReference>
<dbReference type="Gene3D" id="2.10.110.10">
    <property type="entry name" value="Cysteine Rich Protein"/>
    <property type="match status" value="5"/>
</dbReference>
<dbReference type="InterPro" id="IPR042947">
    <property type="entry name" value="FHL5_LIM2"/>
</dbReference>
<dbReference type="InterPro" id="IPR056807">
    <property type="entry name" value="LIM_FHL1/2/3/5_N"/>
</dbReference>
<dbReference type="InterPro" id="IPR001781">
    <property type="entry name" value="Znf_LIM"/>
</dbReference>
<dbReference type="PANTHER" id="PTHR24205">
    <property type="entry name" value="FOUR AND A HALF LIM DOMAINS PROTEIN"/>
    <property type="match status" value="1"/>
</dbReference>
<dbReference type="PANTHER" id="PTHR24205:SF7">
    <property type="entry name" value="FOUR AND A HALF LIM DOMAINS PROTEIN 5"/>
    <property type="match status" value="1"/>
</dbReference>
<dbReference type="Pfam" id="PF00412">
    <property type="entry name" value="LIM"/>
    <property type="match status" value="4"/>
</dbReference>
<dbReference type="Pfam" id="PF25076">
    <property type="entry name" value="LIM_FHL2-3_N"/>
    <property type="match status" value="1"/>
</dbReference>
<dbReference type="SMART" id="SM00132">
    <property type="entry name" value="LIM"/>
    <property type="match status" value="4"/>
</dbReference>
<dbReference type="SUPFAM" id="SSF57716">
    <property type="entry name" value="Glucocorticoid receptor-like (DNA-binding domain)"/>
    <property type="match status" value="5"/>
</dbReference>
<dbReference type="PROSITE" id="PS00478">
    <property type="entry name" value="LIM_DOMAIN_1"/>
    <property type="match status" value="4"/>
</dbReference>
<dbReference type="PROSITE" id="PS50023">
    <property type="entry name" value="LIM_DOMAIN_2"/>
    <property type="match status" value="4"/>
</dbReference>
<protein>
    <recommendedName>
        <fullName>Four and a half LIM domains protein 5</fullName>
        <shortName>FHL-5</shortName>
    </recommendedName>
</protein>
<reference key="1">
    <citation type="journal article" date="2004" name="Genome Res.">
        <title>The status, quality, and expansion of the NIH full-length cDNA project: the Mammalian Gene Collection (MGC).</title>
        <authorList>
            <consortium name="The MGC Project Team"/>
        </authorList>
    </citation>
    <scope>NUCLEOTIDE SEQUENCE [LARGE SCALE MRNA]</scope>
    <source>
        <tissue>Testis</tissue>
    </source>
</reference>
<accession>Q6AXT1</accession>
<feature type="chain" id="PRO_0000075744" description="Four and a half LIM domains protein 5">
    <location>
        <begin position="1"/>
        <end position="284"/>
    </location>
</feature>
<feature type="domain" description="LIM zinc-binding 1" evidence="4">
    <location>
        <begin position="39"/>
        <end position="100"/>
    </location>
</feature>
<feature type="domain" description="LIM zinc-binding 2" evidence="4">
    <location>
        <begin position="101"/>
        <end position="160"/>
    </location>
</feature>
<feature type="domain" description="LIM zinc-binding 3" evidence="4">
    <location>
        <begin position="161"/>
        <end position="220"/>
    </location>
</feature>
<feature type="domain" description="LIM zinc-binding 4" evidence="4">
    <location>
        <begin position="221"/>
        <end position="283"/>
    </location>
</feature>
<feature type="zinc finger region" description="C4-type" evidence="3">
    <location>
        <begin position="8"/>
        <end position="32"/>
    </location>
</feature>
<keyword id="KW-0440">LIM domain</keyword>
<keyword id="KW-0479">Metal-binding</keyword>
<keyword id="KW-0539">Nucleus</keyword>
<keyword id="KW-1185">Reference proteome</keyword>
<keyword id="KW-0677">Repeat</keyword>
<keyword id="KW-0862">Zinc</keyword>
<keyword id="KW-0863">Zinc-finger</keyword>
<gene>
    <name type="primary">Fhl5</name>
</gene>
<evidence type="ECO:0000250" key="1"/>
<evidence type="ECO:0000250" key="2">
    <source>
        <dbReference type="UniProtKB" id="Q9WTX7"/>
    </source>
</evidence>
<evidence type="ECO:0000255" key="3"/>
<evidence type="ECO:0000255" key="4">
    <source>
        <dbReference type="PROSITE-ProRule" id="PRU00125"/>
    </source>
</evidence>
<proteinExistence type="evidence at transcript level"/>
<organism>
    <name type="scientific">Rattus norvegicus</name>
    <name type="common">Rat</name>
    <dbReference type="NCBI Taxonomy" id="10116"/>
    <lineage>
        <taxon>Eukaryota</taxon>
        <taxon>Metazoa</taxon>
        <taxon>Chordata</taxon>
        <taxon>Craniata</taxon>
        <taxon>Vertebrata</taxon>
        <taxon>Euteleostomi</taxon>
        <taxon>Mammalia</taxon>
        <taxon>Eutheria</taxon>
        <taxon>Euarchontoglires</taxon>
        <taxon>Glires</taxon>
        <taxon>Rodentia</taxon>
        <taxon>Myomorpha</taxon>
        <taxon>Muroidea</taxon>
        <taxon>Muridae</taxon>
        <taxon>Murinae</taxon>
        <taxon>Rattus</taxon>
    </lineage>
</organism>